<proteinExistence type="inferred from homology"/>
<reference key="1">
    <citation type="journal article" date="2019" name="Front. Microbiol.">
        <title>Scandinavium goeteborgense gen. nov., sp. nov., a New Member of the Family Enterobacteriaceae Isolated From a Wound Infection, Carries a Novel Quinolone Resistance Gene Variant.</title>
        <authorList>
            <person name="Marathe N.P."/>
            <person name="Salva-Serra F."/>
            <person name="Karlsson R."/>
            <person name="Larsson D.G.J."/>
            <person name="Moore E.R.B."/>
            <person name="Svensson-Stadler L."/>
            <person name="Jakobsson H.E."/>
        </authorList>
    </citation>
    <scope>NUCLEOTIDE SEQUENCE [LARGE SCALE GENOMIC DNA]</scope>
    <scope>FUNCTION</scope>
    <source>
        <strain>NCTC 14286 / CECT 9823 / CCUG 66741</strain>
    </source>
</reference>
<name>QNRB_SCAGO</name>
<comment type="function">
    <text evidence="1">Confers reduced sensitivity to the fluoroquinolone antibiotic ciprofloxacin (five-fold increase in minimum inhibitory concentration) when expressed in E.coli.</text>
</comment>
<comment type="similarity">
    <text evidence="3">Belongs to the pentapeptide repeat protein family.</text>
</comment>
<keyword id="KW-0046">Antibiotic resistance</keyword>
<keyword id="KW-0677">Repeat</keyword>
<sequence>MTLALTAEKIERNRFTGLKVENSTFHHCDFSGADLTGTEFIGCQFYDRENQKGCNFSRAILKDAIFKNCDLSMADFRNASALGIEIRGCRAQGADFRGTSFMNMITTRTWFCSAYITNTNLSYANFSKAVLEKCELWENRWMGTQVLGATFSGSDLSGGEFSSFDWRAANVTHCDLTNSELGDLDVRGVDLQGVKLDSYQVSLIMERLGVAIIG</sequence>
<dbReference type="EMBL" id="MK561856">
    <property type="protein sequence ID" value="QCX19849.1"/>
    <property type="molecule type" value="Genomic_DNA"/>
</dbReference>
<dbReference type="EMBL" id="CP054058">
    <property type="protein sequence ID" value="QKN80496.1"/>
    <property type="molecule type" value="Genomic_DNA"/>
</dbReference>
<dbReference type="RefSeq" id="WP_125353308.1">
    <property type="nucleotide sequence ID" value="NG_067167.1"/>
</dbReference>
<dbReference type="SMR" id="P0DW63"/>
<dbReference type="KEGG" id="sgoe:A8O29_003995"/>
<dbReference type="GO" id="GO:0046677">
    <property type="term" value="P:response to antibiotic"/>
    <property type="evidence" value="ECO:0007669"/>
    <property type="project" value="UniProtKB-KW"/>
</dbReference>
<dbReference type="Gene3D" id="2.160.20.80">
    <property type="entry name" value="E3 ubiquitin-protein ligase SopA"/>
    <property type="match status" value="1"/>
</dbReference>
<dbReference type="InterPro" id="IPR001646">
    <property type="entry name" value="5peptide_repeat"/>
</dbReference>
<dbReference type="InterPro" id="IPR051082">
    <property type="entry name" value="Pentapeptide-BTB/POZ_domain"/>
</dbReference>
<dbReference type="NCBIfam" id="NF033086">
    <property type="entry name" value="penta_rpt_Qnr"/>
    <property type="match status" value="1"/>
</dbReference>
<dbReference type="NCBIfam" id="NF000420">
    <property type="entry name" value="penta_rpt_QnrB"/>
    <property type="match status" value="1"/>
</dbReference>
<dbReference type="PANTHER" id="PTHR14136">
    <property type="entry name" value="BTB_POZ DOMAIN-CONTAINING PROTEIN KCTD9"/>
    <property type="match status" value="1"/>
</dbReference>
<dbReference type="PANTHER" id="PTHR14136:SF17">
    <property type="entry name" value="BTB_POZ DOMAIN-CONTAINING PROTEIN KCTD9"/>
    <property type="match status" value="1"/>
</dbReference>
<dbReference type="Pfam" id="PF00805">
    <property type="entry name" value="Pentapeptide"/>
    <property type="match status" value="4"/>
</dbReference>
<dbReference type="SUPFAM" id="SSF141571">
    <property type="entry name" value="Pentapeptide repeat-like"/>
    <property type="match status" value="1"/>
</dbReference>
<evidence type="ECO:0000269" key="1">
    <source>
    </source>
</evidence>
<evidence type="ECO:0000303" key="2">
    <source>
    </source>
</evidence>
<evidence type="ECO:0000305" key="3"/>
<evidence type="ECO:0000312" key="4">
    <source>
        <dbReference type="EMBL" id="QKN80496.1"/>
    </source>
</evidence>
<organism>
    <name type="scientific">Scandinavium goeteborgense</name>
    <dbReference type="NCBI Taxonomy" id="1851514"/>
    <lineage>
        <taxon>Bacteria</taxon>
        <taxon>Pseudomonadati</taxon>
        <taxon>Pseudomonadota</taxon>
        <taxon>Gammaproteobacteria</taxon>
        <taxon>Enterobacterales</taxon>
        <taxon>Enterobacteriaceae</taxon>
        <taxon>Scandinavium</taxon>
    </lineage>
</organism>
<protein>
    <recommendedName>
        <fullName evidence="2">Quinolone resistance pentapeptide repeat protein QnrB96</fullName>
    </recommendedName>
</protein>
<feature type="chain" id="PRO_0000457949" description="Quinolone resistance pentapeptide repeat protein QnrB96">
    <location>
        <begin position="1"/>
        <end position="214"/>
    </location>
</feature>
<feature type="domain" description="Pentapeptide repeat 1" evidence="3">
    <location>
        <begin position="23"/>
        <end position="103"/>
    </location>
</feature>
<feature type="domain" description="Pentapeptide repeat 2" evidence="3">
    <location>
        <begin position="116"/>
        <end position="189"/>
    </location>
</feature>
<accession>P0DW63</accession>
<gene>
    <name evidence="2" type="primary">qnrB96</name>
    <name evidence="4" type="ordered locus">A8O29_003995</name>
</gene>